<accession>B7JYX3</accession>
<organism>
    <name type="scientific">Rippkaea orientalis (strain PCC 8801 / RF-1)</name>
    <name type="common">Cyanothece sp. (strain PCC 8801)</name>
    <dbReference type="NCBI Taxonomy" id="41431"/>
    <lineage>
        <taxon>Bacteria</taxon>
        <taxon>Bacillati</taxon>
        <taxon>Cyanobacteriota</taxon>
        <taxon>Cyanophyceae</taxon>
        <taxon>Oscillatoriophycideae</taxon>
        <taxon>Chroococcales</taxon>
        <taxon>Aphanothecaceae</taxon>
        <taxon>Rippkaea</taxon>
        <taxon>Rippkaea orientalis</taxon>
    </lineage>
</organism>
<proteinExistence type="inferred from homology"/>
<feature type="signal peptide" evidence="1">
    <location>
        <begin position="1"/>
        <end position="25"/>
    </location>
</feature>
<feature type="chain" id="PRO_5000417665" description="Cytochrome c6">
    <location>
        <begin position="26"/>
        <end position="111"/>
    </location>
</feature>
<feature type="binding site" description="covalent" evidence="1">
    <location>
        <position position="39"/>
    </location>
    <ligand>
        <name>heme c</name>
        <dbReference type="ChEBI" id="CHEBI:61717"/>
    </ligand>
</feature>
<feature type="binding site" description="covalent" evidence="1">
    <location>
        <position position="42"/>
    </location>
    <ligand>
        <name>heme c</name>
        <dbReference type="ChEBI" id="CHEBI:61717"/>
    </ligand>
</feature>
<feature type="binding site" description="axial binding residue" evidence="1">
    <location>
        <position position="43"/>
    </location>
    <ligand>
        <name>heme c</name>
        <dbReference type="ChEBI" id="CHEBI:61717"/>
    </ligand>
    <ligandPart>
        <name>Fe</name>
        <dbReference type="ChEBI" id="CHEBI:18248"/>
    </ligandPart>
</feature>
<feature type="binding site" description="axial binding residue" evidence="1">
    <location>
        <position position="83"/>
    </location>
    <ligand>
        <name>heme c</name>
        <dbReference type="ChEBI" id="CHEBI:61717"/>
    </ligand>
    <ligandPart>
        <name>Fe</name>
        <dbReference type="ChEBI" id="CHEBI:18248"/>
    </ligandPart>
</feature>
<comment type="function">
    <text evidence="1">Functions as an electron carrier between membrane-bound cytochrome b6-f and photosystem I in oxygenic photosynthesis.</text>
</comment>
<comment type="subunit">
    <text evidence="1">Monomer.</text>
</comment>
<comment type="subcellular location">
    <subcellularLocation>
        <location evidence="1">Cellular thylakoid lumen</location>
    </subcellularLocation>
</comment>
<comment type="PTM">
    <text evidence="1">Binds 1 heme c group covalently per subunit.</text>
</comment>
<comment type="similarity">
    <text evidence="1">Belongs to the cytochrome c family. PetJ subfamily.</text>
</comment>
<reference key="1">
    <citation type="journal article" date="2011" name="MBio">
        <title>Novel metabolic attributes of the genus Cyanothece, comprising a group of unicellular nitrogen-fixing Cyanobacteria.</title>
        <authorList>
            <person name="Bandyopadhyay A."/>
            <person name="Elvitigala T."/>
            <person name="Welsh E."/>
            <person name="Stockel J."/>
            <person name="Liberton M."/>
            <person name="Min H."/>
            <person name="Sherman L.A."/>
            <person name="Pakrasi H.B."/>
        </authorList>
    </citation>
    <scope>NUCLEOTIDE SEQUENCE [LARGE SCALE GENOMIC DNA]</scope>
    <source>
        <strain>PCC 8801 / RF-1</strain>
    </source>
</reference>
<evidence type="ECO:0000255" key="1">
    <source>
        <dbReference type="HAMAP-Rule" id="MF_00594"/>
    </source>
</evidence>
<dbReference type="EMBL" id="CP001287">
    <property type="protein sequence ID" value="ACK66050.1"/>
    <property type="molecule type" value="Genomic_DNA"/>
</dbReference>
<dbReference type="RefSeq" id="WP_012595320.1">
    <property type="nucleotide sequence ID" value="NC_011726.1"/>
</dbReference>
<dbReference type="SMR" id="B7JYX3"/>
<dbReference type="STRING" id="41431.PCC8801_2013"/>
<dbReference type="KEGG" id="cyp:PCC8801_2013"/>
<dbReference type="eggNOG" id="COG2010">
    <property type="taxonomic scope" value="Bacteria"/>
</dbReference>
<dbReference type="HOGENOM" id="CLU_101159_1_0_3"/>
<dbReference type="OrthoDB" id="5570429at2"/>
<dbReference type="Proteomes" id="UP000008204">
    <property type="component" value="Chromosome"/>
</dbReference>
<dbReference type="GO" id="GO:0031979">
    <property type="term" value="C:plasma membrane-derived thylakoid lumen"/>
    <property type="evidence" value="ECO:0007669"/>
    <property type="project" value="UniProtKB-SubCell"/>
</dbReference>
<dbReference type="GO" id="GO:0009055">
    <property type="term" value="F:electron transfer activity"/>
    <property type="evidence" value="ECO:0007669"/>
    <property type="project" value="UniProtKB-UniRule"/>
</dbReference>
<dbReference type="GO" id="GO:0020037">
    <property type="term" value="F:heme binding"/>
    <property type="evidence" value="ECO:0007669"/>
    <property type="project" value="InterPro"/>
</dbReference>
<dbReference type="GO" id="GO:0005506">
    <property type="term" value="F:iron ion binding"/>
    <property type="evidence" value="ECO:0007669"/>
    <property type="project" value="InterPro"/>
</dbReference>
<dbReference type="GO" id="GO:0015979">
    <property type="term" value="P:photosynthesis"/>
    <property type="evidence" value="ECO:0007669"/>
    <property type="project" value="UniProtKB-UniRule"/>
</dbReference>
<dbReference type="FunFam" id="1.10.760.10:FF:000038">
    <property type="entry name" value="Cytochrome c6"/>
    <property type="match status" value="1"/>
</dbReference>
<dbReference type="Gene3D" id="1.10.760.10">
    <property type="entry name" value="Cytochrome c-like domain"/>
    <property type="match status" value="1"/>
</dbReference>
<dbReference type="HAMAP" id="MF_00594">
    <property type="entry name" value="Cytc_PetJ"/>
    <property type="match status" value="1"/>
</dbReference>
<dbReference type="InterPro" id="IPR009056">
    <property type="entry name" value="Cyt_c-like_dom"/>
</dbReference>
<dbReference type="InterPro" id="IPR036909">
    <property type="entry name" value="Cyt_c-like_dom_sf"/>
</dbReference>
<dbReference type="InterPro" id="IPR023655">
    <property type="entry name" value="Cyt_C6"/>
</dbReference>
<dbReference type="InterPro" id="IPR008168">
    <property type="entry name" value="Cyt_C_IC"/>
</dbReference>
<dbReference type="NCBIfam" id="NF045930">
    <property type="entry name" value="Cytc6PetJCyano"/>
    <property type="match status" value="1"/>
</dbReference>
<dbReference type="PANTHER" id="PTHR34688">
    <property type="entry name" value="CYTOCHROME C6, CHLOROPLASTIC"/>
    <property type="match status" value="1"/>
</dbReference>
<dbReference type="PANTHER" id="PTHR34688:SF2">
    <property type="entry name" value="CYTOCHROME C6, CHLOROPLASTIC"/>
    <property type="match status" value="1"/>
</dbReference>
<dbReference type="Pfam" id="PF13442">
    <property type="entry name" value="Cytochrome_CBB3"/>
    <property type="match status" value="1"/>
</dbReference>
<dbReference type="PRINTS" id="PR00605">
    <property type="entry name" value="CYTCHROMECIC"/>
</dbReference>
<dbReference type="SUPFAM" id="SSF46626">
    <property type="entry name" value="Cytochrome c"/>
    <property type="match status" value="1"/>
</dbReference>
<dbReference type="PROSITE" id="PS51007">
    <property type="entry name" value="CYTC"/>
    <property type="match status" value="1"/>
</dbReference>
<name>CYC6_RIPO1</name>
<gene>
    <name evidence="1" type="primary">petJ</name>
    <name type="ordered locus">PCC8801_2013</name>
</gene>
<protein>
    <recommendedName>
        <fullName evidence="1">Cytochrome c6</fullName>
    </recommendedName>
    <alternativeName>
        <fullName evidence="1">Cytochrome c-553</fullName>
    </alternativeName>
    <alternativeName>
        <fullName evidence="1">Cytochrome c553</fullName>
    </alternativeName>
    <alternativeName>
        <fullName evidence="1">Soluble cytochrome f</fullName>
    </alternativeName>
</protein>
<sequence>MKRLLSLIFLVFVFFAVMLTPPALAGDAAAGKTVFTAKCAQCHLGGKNLVNPAKTLSKADLEANGMASLDAIITQVTNGKAAMPAFGKLLTAEQIENVATYVLAQAEADWK</sequence>
<keyword id="KW-0249">Electron transport</keyword>
<keyword id="KW-0349">Heme</keyword>
<keyword id="KW-0408">Iron</keyword>
<keyword id="KW-0479">Metal-binding</keyword>
<keyword id="KW-0602">Photosynthesis</keyword>
<keyword id="KW-1185">Reference proteome</keyword>
<keyword id="KW-0732">Signal</keyword>
<keyword id="KW-0793">Thylakoid</keyword>
<keyword id="KW-0813">Transport</keyword>